<reference key="1">
    <citation type="journal article" date="2007" name="J. Bacteriol.">
        <title>Whole-genome analysis of the methyl tert-butyl ether-degrading beta-proteobacterium Methylibium petroleiphilum PM1.</title>
        <authorList>
            <person name="Kane S.R."/>
            <person name="Chakicherla A.Y."/>
            <person name="Chain P.S.G."/>
            <person name="Schmidt R."/>
            <person name="Shin M.W."/>
            <person name="Legler T.C."/>
            <person name="Scow K.M."/>
            <person name="Larimer F.W."/>
            <person name="Lucas S.M."/>
            <person name="Richardson P.M."/>
            <person name="Hristova K.R."/>
        </authorList>
    </citation>
    <scope>NUCLEOTIDE SEQUENCE [LARGE SCALE GENOMIC DNA]</scope>
    <source>
        <strain>ATCC BAA-1232 / LMG 22953 / PM1</strain>
    </source>
</reference>
<proteinExistence type="inferred from homology"/>
<comment type="catalytic activity">
    <reaction evidence="1">
        <text>N-(5-phospho-beta-D-ribosyl)anthranilate = 1-(2-carboxyphenylamino)-1-deoxy-D-ribulose 5-phosphate</text>
        <dbReference type="Rhea" id="RHEA:21540"/>
        <dbReference type="ChEBI" id="CHEBI:18277"/>
        <dbReference type="ChEBI" id="CHEBI:58613"/>
        <dbReference type="EC" id="5.3.1.24"/>
    </reaction>
</comment>
<comment type="pathway">
    <text evidence="1">Amino-acid biosynthesis; L-tryptophan biosynthesis; L-tryptophan from chorismate: step 3/5.</text>
</comment>
<comment type="similarity">
    <text evidence="1">Belongs to the TrpF family.</text>
</comment>
<keyword id="KW-0028">Amino-acid biosynthesis</keyword>
<keyword id="KW-0057">Aromatic amino acid biosynthesis</keyword>
<keyword id="KW-0413">Isomerase</keyword>
<keyword id="KW-1185">Reference proteome</keyword>
<keyword id="KW-0822">Tryptophan biosynthesis</keyword>
<feature type="chain" id="PRO_1000197111" description="N-(5'-phosphoribosyl)anthranilate isomerase">
    <location>
        <begin position="1"/>
        <end position="213"/>
    </location>
</feature>
<name>TRPF_METPP</name>
<evidence type="ECO:0000255" key="1">
    <source>
        <dbReference type="HAMAP-Rule" id="MF_00135"/>
    </source>
</evidence>
<protein>
    <recommendedName>
        <fullName evidence="1">N-(5'-phosphoribosyl)anthranilate isomerase</fullName>
        <shortName evidence="1">PRAI</shortName>
        <ecNumber evidence="1">5.3.1.24</ecNumber>
    </recommendedName>
</protein>
<sequence length="213" mass="22254">MRTRIKICGLTREADVDAAVEAGVDAVGFVFYAKSPRAVSVAHAAALARRLPPFVTPVGLFVNAAPHELAAACAAIPTLMLQFHGDETPAQCDAVGRPYLRAARMTPGFDLLNFAQQFSSAQALLLDAYVEGYGGGGKVFDWSLVPSGVTPPLVLSGGLSAANVTDGVLKVRPWAVDVSSGVESAKGIKDADAVRRFCEAVREADARVAASEI</sequence>
<organism>
    <name type="scientific">Methylibium petroleiphilum (strain ATCC BAA-1232 / LMG 22953 / PM1)</name>
    <dbReference type="NCBI Taxonomy" id="420662"/>
    <lineage>
        <taxon>Bacteria</taxon>
        <taxon>Pseudomonadati</taxon>
        <taxon>Pseudomonadota</taxon>
        <taxon>Betaproteobacteria</taxon>
        <taxon>Burkholderiales</taxon>
        <taxon>Sphaerotilaceae</taxon>
        <taxon>Methylibium</taxon>
    </lineage>
</organism>
<accession>A2SHS5</accession>
<dbReference type="EC" id="5.3.1.24" evidence="1"/>
<dbReference type="EMBL" id="CP000555">
    <property type="protein sequence ID" value="ABM95114.1"/>
    <property type="molecule type" value="Genomic_DNA"/>
</dbReference>
<dbReference type="RefSeq" id="WP_011829751.1">
    <property type="nucleotide sequence ID" value="NC_008825.1"/>
</dbReference>
<dbReference type="SMR" id="A2SHS5"/>
<dbReference type="STRING" id="420662.Mpe_A2158"/>
<dbReference type="KEGG" id="mpt:Mpe_A2158"/>
<dbReference type="eggNOG" id="COG0135">
    <property type="taxonomic scope" value="Bacteria"/>
</dbReference>
<dbReference type="HOGENOM" id="CLU_076364_2_0_4"/>
<dbReference type="UniPathway" id="UPA00035">
    <property type="reaction ID" value="UER00042"/>
</dbReference>
<dbReference type="Proteomes" id="UP000000366">
    <property type="component" value="Chromosome"/>
</dbReference>
<dbReference type="GO" id="GO:0004640">
    <property type="term" value="F:phosphoribosylanthranilate isomerase activity"/>
    <property type="evidence" value="ECO:0007669"/>
    <property type="project" value="UniProtKB-UniRule"/>
</dbReference>
<dbReference type="GO" id="GO:0000162">
    <property type="term" value="P:L-tryptophan biosynthetic process"/>
    <property type="evidence" value="ECO:0007669"/>
    <property type="project" value="UniProtKB-UniRule"/>
</dbReference>
<dbReference type="CDD" id="cd00405">
    <property type="entry name" value="PRAI"/>
    <property type="match status" value="1"/>
</dbReference>
<dbReference type="Gene3D" id="3.20.20.70">
    <property type="entry name" value="Aldolase class I"/>
    <property type="match status" value="1"/>
</dbReference>
<dbReference type="HAMAP" id="MF_00135">
    <property type="entry name" value="PRAI"/>
    <property type="match status" value="1"/>
</dbReference>
<dbReference type="InterPro" id="IPR013785">
    <property type="entry name" value="Aldolase_TIM"/>
</dbReference>
<dbReference type="InterPro" id="IPR001240">
    <property type="entry name" value="PRAI_dom"/>
</dbReference>
<dbReference type="InterPro" id="IPR011060">
    <property type="entry name" value="RibuloseP-bd_barrel"/>
</dbReference>
<dbReference type="InterPro" id="IPR044643">
    <property type="entry name" value="TrpF_fam"/>
</dbReference>
<dbReference type="NCBIfam" id="NF002298">
    <property type="entry name" value="PRK01222.1-4"/>
    <property type="match status" value="1"/>
</dbReference>
<dbReference type="NCBIfam" id="NF002299">
    <property type="entry name" value="PRK01222.1-6"/>
    <property type="match status" value="1"/>
</dbReference>
<dbReference type="PANTHER" id="PTHR42894">
    <property type="entry name" value="N-(5'-PHOSPHORIBOSYL)ANTHRANILATE ISOMERASE"/>
    <property type="match status" value="1"/>
</dbReference>
<dbReference type="PANTHER" id="PTHR42894:SF1">
    <property type="entry name" value="N-(5'-PHOSPHORIBOSYL)ANTHRANILATE ISOMERASE"/>
    <property type="match status" value="1"/>
</dbReference>
<dbReference type="Pfam" id="PF00697">
    <property type="entry name" value="PRAI"/>
    <property type="match status" value="1"/>
</dbReference>
<dbReference type="SUPFAM" id="SSF51366">
    <property type="entry name" value="Ribulose-phoshate binding barrel"/>
    <property type="match status" value="1"/>
</dbReference>
<gene>
    <name evidence="1" type="primary">trpF</name>
    <name type="ordered locus">Mpe_A2158</name>
</gene>